<proteinExistence type="inferred from homology"/>
<organism>
    <name type="scientific">Saccharomyces cerevisiae (strain YJM789)</name>
    <name type="common">Baker's yeast</name>
    <dbReference type="NCBI Taxonomy" id="307796"/>
    <lineage>
        <taxon>Eukaryota</taxon>
        <taxon>Fungi</taxon>
        <taxon>Dikarya</taxon>
        <taxon>Ascomycota</taxon>
        <taxon>Saccharomycotina</taxon>
        <taxon>Saccharomycetes</taxon>
        <taxon>Saccharomycetales</taxon>
        <taxon>Saccharomycetaceae</taxon>
        <taxon>Saccharomyces</taxon>
    </lineage>
</organism>
<accession>A7A003</accession>
<keyword id="KW-0072">Autophagy</keyword>
<keyword id="KW-0119">Carbohydrate metabolism</keyword>
<keyword id="KW-0131">Cell cycle</keyword>
<keyword id="KW-0132">Cell division</keyword>
<keyword id="KW-0134">Cell wall</keyword>
<keyword id="KW-0961">Cell wall biogenesis/degradation</keyword>
<keyword id="KW-0326">Glycosidase</keyword>
<keyword id="KW-0378">Hydrolase</keyword>
<keyword id="KW-0472">Membrane</keyword>
<keyword id="KW-0496">Mitochondrion</keyword>
<keyword id="KW-1000">Mitochondrion outer membrane</keyword>
<keyword id="KW-0624">Polysaccharide degradation</keyword>
<keyword id="KW-0964">Secreted</keyword>
<keyword id="KW-0717">Septation</keyword>
<keyword id="KW-0732">Signal</keyword>
<keyword id="KW-0346">Stress response</keyword>
<comment type="function">
    <text evidence="1">Involved in aging, oxidative stress response, and in the regulation of mitochondrial biogenesis. Inactivation of UTH1 increases life span, leads to higher resistance to heat stress and to hydrogen peroxide, and increases sensitivity to the superoxide radical-generating drug paraquat and to copper. Also required for the selective autophagic degradation of mitochondria (mitophagy) in response to nitrogen starvation. May play a role in cell wall morphogenesis and septation. Involved in the remodeling of the cell wall during the various phases of yeast culture development and under various environmental conditions and plays a role in septation. Involved in cell sensitivity to boric acid (By similarity).</text>
</comment>
<comment type="subcellular location">
    <subcellularLocation>
        <location evidence="2">Mitochondrion outer membrane</location>
        <topology evidence="2">Peripheral membrane protein</topology>
    </subcellularLocation>
    <subcellularLocation>
        <location evidence="2">Secreted</location>
        <location evidence="2">Cell wall</location>
    </subcellularLocation>
    <text evidence="2">Non-covalently bound to the cell wall.</text>
</comment>
<comment type="similarity">
    <text evidence="4">Belongs to the SUN family.</text>
</comment>
<comment type="sequence caution" evidence="4">
    <conflict type="erroneous initiation">
        <sequence resource="EMBL-CDS" id="EDN59946"/>
    </conflict>
    <text>Extended N-terminus.</text>
</comment>
<dbReference type="EC" id="3.2.1.-"/>
<dbReference type="EMBL" id="AAFW02000152">
    <property type="protein sequence ID" value="EDN59946.1"/>
    <property type="status" value="ALT_INIT"/>
    <property type="molecule type" value="Genomic_DNA"/>
</dbReference>
<dbReference type="HOGENOM" id="CLU_033459_0_0_1"/>
<dbReference type="OrthoDB" id="36584at4893"/>
<dbReference type="Proteomes" id="UP000007060">
    <property type="component" value="Unassembled WGS sequence"/>
</dbReference>
<dbReference type="GO" id="GO:0009986">
    <property type="term" value="C:cell surface"/>
    <property type="evidence" value="ECO:0007669"/>
    <property type="project" value="TreeGrafter"/>
</dbReference>
<dbReference type="GO" id="GO:0005576">
    <property type="term" value="C:extracellular region"/>
    <property type="evidence" value="ECO:0007669"/>
    <property type="project" value="UniProtKB-KW"/>
</dbReference>
<dbReference type="GO" id="GO:0009277">
    <property type="term" value="C:fungal-type cell wall"/>
    <property type="evidence" value="ECO:0007669"/>
    <property type="project" value="TreeGrafter"/>
</dbReference>
<dbReference type="GO" id="GO:0005741">
    <property type="term" value="C:mitochondrial outer membrane"/>
    <property type="evidence" value="ECO:0007669"/>
    <property type="project" value="UniProtKB-SubCell"/>
</dbReference>
<dbReference type="GO" id="GO:0016798">
    <property type="term" value="F:hydrolase activity, acting on glycosyl bonds"/>
    <property type="evidence" value="ECO:0007669"/>
    <property type="project" value="UniProtKB-KW"/>
</dbReference>
<dbReference type="GO" id="GO:0006914">
    <property type="term" value="P:autophagy"/>
    <property type="evidence" value="ECO:0007669"/>
    <property type="project" value="UniProtKB-KW"/>
</dbReference>
<dbReference type="GO" id="GO:0000917">
    <property type="term" value="P:division septum assembly"/>
    <property type="evidence" value="ECO:0007669"/>
    <property type="project" value="UniProtKB-KW"/>
</dbReference>
<dbReference type="GO" id="GO:0031505">
    <property type="term" value="P:fungal-type cell wall organization"/>
    <property type="evidence" value="ECO:0007669"/>
    <property type="project" value="TreeGrafter"/>
</dbReference>
<dbReference type="GO" id="GO:0000272">
    <property type="term" value="P:polysaccharide catabolic process"/>
    <property type="evidence" value="ECO:0007669"/>
    <property type="project" value="UniProtKB-KW"/>
</dbReference>
<dbReference type="InterPro" id="IPR051526">
    <property type="entry name" value="Beta-Glucosidase_SUN"/>
</dbReference>
<dbReference type="InterPro" id="IPR005556">
    <property type="entry name" value="SUN"/>
</dbReference>
<dbReference type="PANTHER" id="PTHR31316">
    <property type="entry name" value="BETA-GLUCOSIDASE-LIKE PROTEIN NCA3, MITOCHONDRIAL-RELATED"/>
    <property type="match status" value="1"/>
</dbReference>
<dbReference type="PANTHER" id="PTHR31316:SF2">
    <property type="entry name" value="BETA-GLUCOSIDASE-LIKE PROTEIN NCA3, MITOCHONDRIAL-RELATED"/>
    <property type="match status" value="1"/>
</dbReference>
<dbReference type="Pfam" id="PF03856">
    <property type="entry name" value="SUN"/>
    <property type="match status" value="1"/>
</dbReference>
<evidence type="ECO:0000250" key="1"/>
<evidence type="ECO:0000250" key="2">
    <source>
        <dbReference type="UniProtKB" id="P36135"/>
    </source>
</evidence>
<evidence type="ECO:0000255" key="3"/>
<evidence type="ECO:0000305" key="4"/>
<reference key="1">
    <citation type="journal article" date="2007" name="Proc. Natl. Acad. Sci. U.S.A.">
        <title>Genome sequencing and comparative analysis of Saccharomyces cerevisiae strain YJM789.</title>
        <authorList>
            <person name="Wei W."/>
            <person name="McCusker J.H."/>
            <person name="Hyman R.W."/>
            <person name="Jones T."/>
            <person name="Ning Y."/>
            <person name="Cao Z."/>
            <person name="Gu Z."/>
            <person name="Bruno D."/>
            <person name="Miranda M."/>
            <person name="Nguyen M."/>
            <person name="Wilhelmy J."/>
            <person name="Komp C."/>
            <person name="Tamse R."/>
            <person name="Wang X."/>
            <person name="Jia P."/>
            <person name="Luedi P."/>
            <person name="Oefner P.J."/>
            <person name="David L."/>
            <person name="Dietrich F.S."/>
            <person name="Li Y."/>
            <person name="Davis R.W."/>
            <person name="Steinmetz L.M."/>
        </authorList>
    </citation>
    <scope>NUCLEOTIDE SEQUENCE [LARGE SCALE GENOMIC DNA]</scope>
    <source>
        <strain>YJM789</strain>
    </source>
</reference>
<feature type="signal peptide" evidence="3">
    <location>
        <begin position="1"/>
        <end position="17"/>
    </location>
</feature>
<feature type="chain" id="PRO_0000377653" description="Probable secreted beta-glucosidase UTH1">
    <location>
        <begin position="18"/>
        <end position="362"/>
    </location>
</feature>
<protein>
    <recommendedName>
        <fullName>Probable secreted beta-glucosidase UTH1</fullName>
        <ecNumber>3.2.1.-</ecNumber>
    </recommendedName>
    <alternativeName>
        <fullName>Youth protein 1</fullName>
    </alternativeName>
</protein>
<gene>
    <name type="primary">UTH1</name>
    <name type="ORF">SCY_3413</name>
</gene>
<name>UTH1_YEAS7</name>
<sequence>MKLSALLALSASTAVLAAPAVHHSDNHHHNDKRAVVTVTQYVNADGAVVIPAANTATSAAADGKVESVAAATTTLSSTAAAATTSAAASSSSSSSSSSSSVGSGDFEDGTISCSDFPSGQGAVSLDWLGLGGWASIMDMNGNTATSCQDGYYCSYACSPGYAKTQWPSEQPSDGRSVGGLYCKNGKLYRSNTDTNSLCVEGQGSAQAVNKVSGSIAICGTDYPGSENMVVPTVVGAGSSQPINVIKEDSYYQWQGKKTSAQYYVNNAGVSVEDGCIWGTEGSGVGNWAPVVLGAGYTDGITYLSIIPNPNNKEAPNFNIKIVATDGSTVNGACSYENGVYSGSGSDGCTVSVTSGSANFVFY</sequence>